<accession>A1V8A7</accession>
<dbReference type="EMBL" id="CP000526">
    <property type="protein sequence ID" value="ABM51894.1"/>
    <property type="molecule type" value="Genomic_DNA"/>
</dbReference>
<dbReference type="RefSeq" id="WP_004198359.1">
    <property type="nucleotide sequence ID" value="NC_008785.1"/>
</dbReference>
<dbReference type="SMR" id="A1V8A7"/>
<dbReference type="GeneID" id="93171021"/>
<dbReference type="KEGG" id="bmv:BMASAVP1_A3173"/>
<dbReference type="HOGENOM" id="CLU_072226_1_1_4"/>
<dbReference type="GO" id="GO:0015935">
    <property type="term" value="C:small ribosomal subunit"/>
    <property type="evidence" value="ECO:0007669"/>
    <property type="project" value="InterPro"/>
</dbReference>
<dbReference type="GO" id="GO:0019843">
    <property type="term" value="F:rRNA binding"/>
    <property type="evidence" value="ECO:0007669"/>
    <property type="project" value="UniProtKB-UniRule"/>
</dbReference>
<dbReference type="GO" id="GO:0003735">
    <property type="term" value="F:structural constituent of ribosome"/>
    <property type="evidence" value="ECO:0007669"/>
    <property type="project" value="InterPro"/>
</dbReference>
<dbReference type="GO" id="GO:0000049">
    <property type="term" value="F:tRNA binding"/>
    <property type="evidence" value="ECO:0007669"/>
    <property type="project" value="UniProtKB-UniRule"/>
</dbReference>
<dbReference type="GO" id="GO:0006412">
    <property type="term" value="P:translation"/>
    <property type="evidence" value="ECO:0007669"/>
    <property type="project" value="UniProtKB-UniRule"/>
</dbReference>
<dbReference type="CDD" id="cd14869">
    <property type="entry name" value="uS7_Bacteria"/>
    <property type="match status" value="1"/>
</dbReference>
<dbReference type="FunFam" id="1.10.455.10:FF:000001">
    <property type="entry name" value="30S ribosomal protein S7"/>
    <property type="match status" value="1"/>
</dbReference>
<dbReference type="Gene3D" id="1.10.455.10">
    <property type="entry name" value="Ribosomal protein S7 domain"/>
    <property type="match status" value="1"/>
</dbReference>
<dbReference type="HAMAP" id="MF_00480_B">
    <property type="entry name" value="Ribosomal_uS7_B"/>
    <property type="match status" value="1"/>
</dbReference>
<dbReference type="InterPro" id="IPR000235">
    <property type="entry name" value="Ribosomal_uS7"/>
</dbReference>
<dbReference type="InterPro" id="IPR005717">
    <property type="entry name" value="Ribosomal_uS7_bac/org-type"/>
</dbReference>
<dbReference type="InterPro" id="IPR020606">
    <property type="entry name" value="Ribosomal_uS7_CS"/>
</dbReference>
<dbReference type="InterPro" id="IPR023798">
    <property type="entry name" value="Ribosomal_uS7_dom"/>
</dbReference>
<dbReference type="InterPro" id="IPR036823">
    <property type="entry name" value="Ribosomal_uS7_dom_sf"/>
</dbReference>
<dbReference type="NCBIfam" id="TIGR01029">
    <property type="entry name" value="rpsG_bact"/>
    <property type="match status" value="1"/>
</dbReference>
<dbReference type="PANTHER" id="PTHR11205">
    <property type="entry name" value="RIBOSOMAL PROTEIN S7"/>
    <property type="match status" value="1"/>
</dbReference>
<dbReference type="Pfam" id="PF00177">
    <property type="entry name" value="Ribosomal_S7"/>
    <property type="match status" value="1"/>
</dbReference>
<dbReference type="PIRSF" id="PIRSF002122">
    <property type="entry name" value="RPS7p_RPS7a_RPS5e_RPS7o"/>
    <property type="match status" value="1"/>
</dbReference>
<dbReference type="SUPFAM" id="SSF47973">
    <property type="entry name" value="Ribosomal protein S7"/>
    <property type="match status" value="1"/>
</dbReference>
<dbReference type="PROSITE" id="PS00052">
    <property type="entry name" value="RIBOSOMAL_S7"/>
    <property type="match status" value="1"/>
</dbReference>
<comment type="function">
    <text evidence="1">One of the primary rRNA binding proteins, it binds directly to 16S rRNA where it nucleates assembly of the head domain of the 30S subunit. Is located at the subunit interface close to the decoding center, probably blocks exit of the E-site tRNA.</text>
</comment>
<comment type="subunit">
    <text evidence="1">Part of the 30S ribosomal subunit. Contacts proteins S9 and S11.</text>
</comment>
<comment type="similarity">
    <text evidence="1">Belongs to the universal ribosomal protein uS7 family.</text>
</comment>
<gene>
    <name evidence="1" type="primary">rpsG</name>
    <name type="ordered locus">BMASAVP1_A3173</name>
</gene>
<keyword id="KW-0687">Ribonucleoprotein</keyword>
<keyword id="KW-0689">Ribosomal protein</keyword>
<keyword id="KW-0694">RNA-binding</keyword>
<keyword id="KW-0699">rRNA-binding</keyword>
<keyword id="KW-0820">tRNA-binding</keyword>
<organism>
    <name type="scientific">Burkholderia mallei (strain SAVP1)</name>
    <dbReference type="NCBI Taxonomy" id="320388"/>
    <lineage>
        <taxon>Bacteria</taxon>
        <taxon>Pseudomonadati</taxon>
        <taxon>Pseudomonadota</taxon>
        <taxon>Betaproteobacteria</taxon>
        <taxon>Burkholderiales</taxon>
        <taxon>Burkholderiaceae</taxon>
        <taxon>Burkholderia</taxon>
        <taxon>pseudomallei group</taxon>
    </lineage>
</organism>
<sequence>MPRRREVPKREVLPDPKYGNVDVAKFMNMLMLSGKKSVAERIVYGAFEQIQTKGGKDPLEVFTVALNNVKPVVEVKSRRVGGANYQVPVEVRPSRRMALAMRWLREAAKKRSEKSMALRLAGELSEAAEGRGGAMKKRDEVHRMAEANRAFSHFRF</sequence>
<protein>
    <recommendedName>
        <fullName evidence="1">Small ribosomal subunit protein uS7</fullName>
    </recommendedName>
    <alternativeName>
        <fullName evidence="2">30S ribosomal protein S7</fullName>
    </alternativeName>
</protein>
<reference key="1">
    <citation type="journal article" date="2010" name="Genome Biol. Evol.">
        <title>Continuing evolution of Burkholderia mallei through genome reduction and large-scale rearrangements.</title>
        <authorList>
            <person name="Losada L."/>
            <person name="Ronning C.M."/>
            <person name="DeShazer D."/>
            <person name="Woods D."/>
            <person name="Fedorova N."/>
            <person name="Kim H.S."/>
            <person name="Shabalina S.A."/>
            <person name="Pearson T.R."/>
            <person name="Brinkac L."/>
            <person name="Tan P."/>
            <person name="Nandi T."/>
            <person name="Crabtree J."/>
            <person name="Badger J."/>
            <person name="Beckstrom-Sternberg S."/>
            <person name="Saqib M."/>
            <person name="Schutzer S.E."/>
            <person name="Keim P."/>
            <person name="Nierman W.C."/>
        </authorList>
    </citation>
    <scope>NUCLEOTIDE SEQUENCE [LARGE SCALE GENOMIC DNA]</scope>
    <source>
        <strain>SAVP1</strain>
    </source>
</reference>
<name>RS7_BURMS</name>
<proteinExistence type="inferred from homology"/>
<evidence type="ECO:0000255" key="1">
    <source>
        <dbReference type="HAMAP-Rule" id="MF_00480"/>
    </source>
</evidence>
<evidence type="ECO:0000305" key="2"/>
<feature type="chain" id="PRO_1000014159" description="Small ribosomal subunit protein uS7">
    <location>
        <begin position="1"/>
        <end position="156"/>
    </location>
</feature>